<sequence>MTDRLVPASLALRDDGTLVSPEFGDLHLGASGALAHRVFVAGNGLPTRWQDRRTFTIVATGFGAGGSFLAAWAAWRDDPARCERLHFVAVEPHPFSRDDLRRAATHIVADTTISADVEALADAWPMLVPGLHRLEFDEGRVVLTLAFGESIDMLGKIVARADAFCLDGLASSSDADLQSTDVVRALSKIAGEHATFAVHASSDALKHALGKSGFTYREVDDLLVGEYAPRWRARRHEPPLALPVATRRAIVIGAGLAGCAVVERLAARGWEVTLIERHDRIASDASGNPAGVFHPLMTRDDNVASRLTRGGFLHAIARWRALENAGHAFARSTNGMIHLAESADDFERMRDAFDAFGPPSDYVSLLDIEAARAHLNLSVAQGGLLFPHGGAVWPAGLCAAQYAAAGERVRLLASTRVAKLERRGDAWHALDDAGGTLAEAPVVVLANAGDAARLAGLQHVALQPVRGQLTLLPPGSTAPLPCPTIGDGYAVPLDDGTLLIGATFEPDDVDPAMRAAGHLENLERVRHLLPGLIGDLPDPDTLRGRVAFRWVVGDRLPLLGPLADEAGAIANARALSGAQARDLPRLPGLYGAFGFGSRGLVWAALGAELIASQLEGEPWPLERELADAVDPARFLIRALRARRVGRAG</sequence>
<reference key="1">
    <citation type="submission" date="2005-10" db="EMBL/GenBank/DDBJ databases">
        <title>Complete sequence of chromosome 1 of Burkholderia sp. 383.</title>
        <authorList>
            <consortium name="US DOE Joint Genome Institute"/>
            <person name="Copeland A."/>
            <person name="Lucas S."/>
            <person name="Lapidus A."/>
            <person name="Barry K."/>
            <person name="Detter J.C."/>
            <person name="Glavina T."/>
            <person name="Hammon N."/>
            <person name="Israni S."/>
            <person name="Pitluck S."/>
            <person name="Chain P."/>
            <person name="Malfatti S."/>
            <person name="Shin M."/>
            <person name="Vergez L."/>
            <person name="Schmutz J."/>
            <person name="Larimer F."/>
            <person name="Land M."/>
            <person name="Kyrpides N."/>
            <person name="Lykidis A."/>
            <person name="Richardson P."/>
        </authorList>
    </citation>
    <scope>NUCLEOTIDE SEQUENCE [LARGE SCALE GENOMIC DNA]</scope>
    <source>
        <strain>ATCC 17760 / DSM 23089 / LMG 22485 / NCIMB 9086 / R18194 / 383</strain>
    </source>
</reference>
<dbReference type="EC" id="2.1.1.61" evidence="1"/>
<dbReference type="EC" id="1.5.-.-" evidence="1"/>
<dbReference type="EMBL" id="CP000151">
    <property type="protein sequence ID" value="ABB06850.1"/>
    <property type="molecule type" value="Genomic_DNA"/>
</dbReference>
<dbReference type="RefSeq" id="WP_011350490.1">
    <property type="nucleotide sequence ID" value="NC_007510.1"/>
</dbReference>
<dbReference type="SMR" id="Q39L16"/>
<dbReference type="GeneID" id="45093157"/>
<dbReference type="KEGG" id="bur:Bcep18194_A3248"/>
<dbReference type="PATRIC" id="fig|482957.22.peg.74"/>
<dbReference type="HOGENOM" id="CLU_022427_1_0_4"/>
<dbReference type="Proteomes" id="UP000002705">
    <property type="component" value="Chromosome 1"/>
</dbReference>
<dbReference type="GO" id="GO:0005737">
    <property type="term" value="C:cytoplasm"/>
    <property type="evidence" value="ECO:0007669"/>
    <property type="project" value="UniProtKB-SubCell"/>
</dbReference>
<dbReference type="GO" id="GO:0050660">
    <property type="term" value="F:flavin adenine dinucleotide binding"/>
    <property type="evidence" value="ECO:0007669"/>
    <property type="project" value="UniProtKB-UniRule"/>
</dbReference>
<dbReference type="GO" id="GO:0016645">
    <property type="term" value="F:oxidoreductase activity, acting on the CH-NH group of donors"/>
    <property type="evidence" value="ECO:0007669"/>
    <property type="project" value="InterPro"/>
</dbReference>
<dbReference type="GO" id="GO:0004808">
    <property type="term" value="F:tRNA (5-methylaminomethyl-2-thiouridylate)(34)-methyltransferase activity"/>
    <property type="evidence" value="ECO:0007669"/>
    <property type="project" value="UniProtKB-EC"/>
</dbReference>
<dbReference type="GO" id="GO:0032259">
    <property type="term" value="P:methylation"/>
    <property type="evidence" value="ECO:0007669"/>
    <property type="project" value="UniProtKB-KW"/>
</dbReference>
<dbReference type="GO" id="GO:0002097">
    <property type="term" value="P:tRNA wobble base modification"/>
    <property type="evidence" value="ECO:0007669"/>
    <property type="project" value="UniProtKB-UniRule"/>
</dbReference>
<dbReference type="Gene3D" id="3.30.9.10">
    <property type="entry name" value="D-Amino Acid Oxidase, subunit A, domain 2"/>
    <property type="match status" value="1"/>
</dbReference>
<dbReference type="Gene3D" id="3.50.50.60">
    <property type="entry name" value="FAD/NAD(P)-binding domain"/>
    <property type="match status" value="1"/>
</dbReference>
<dbReference type="Gene3D" id="3.40.50.150">
    <property type="entry name" value="Vaccinia Virus protein VP39"/>
    <property type="match status" value="1"/>
</dbReference>
<dbReference type="HAMAP" id="MF_01102">
    <property type="entry name" value="MnmC"/>
    <property type="match status" value="1"/>
</dbReference>
<dbReference type="InterPro" id="IPR006076">
    <property type="entry name" value="FAD-dep_OxRdtase"/>
</dbReference>
<dbReference type="InterPro" id="IPR036188">
    <property type="entry name" value="FAD/NAD-bd_sf"/>
</dbReference>
<dbReference type="InterPro" id="IPR008471">
    <property type="entry name" value="MnmC-like_methylTransf"/>
</dbReference>
<dbReference type="InterPro" id="IPR029063">
    <property type="entry name" value="SAM-dependent_MTases_sf"/>
</dbReference>
<dbReference type="InterPro" id="IPR023032">
    <property type="entry name" value="tRNA_MAMT_biosynth_bifunc_MnmC"/>
</dbReference>
<dbReference type="InterPro" id="IPR017610">
    <property type="entry name" value="tRNA_S-uridine_synth_MnmC_C"/>
</dbReference>
<dbReference type="NCBIfam" id="TIGR03197">
    <property type="entry name" value="MnmC_Cterm"/>
    <property type="match status" value="1"/>
</dbReference>
<dbReference type="NCBIfam" id="NF002483">
    <property type="entry name" value="PRK01747.1-4"/>
    <property type="match status" value="1"/>
</dbReference>
<dbReference type="PANTHER" id="PTHR13847">
    <property type="entry name" value="SARCOSINE DEHYDROGENASE-RELATED"/>
    <property type="match status" value="1"/>
</dbReference>
<dbReference type="PANTHER" id="PTHR13847:SF283">
    <property type="entry name" value="TRNA 5-METHYLAMINOMETHYL-2-THIOURIDINE BIOSYNTHESIS BIFUNCTIONAL PROTEIN MNMC"/>
    <property type="match status" value="1"/>
</dbReference>
<dbReference type="Pfam" id="PF01266">
    <property type="entry name" value="DAO"/>
    <property type="match status" value="1"/>
</dbReference>
<dbReference type="Pfam" id="PF05430">
    <property type="entry name" value="Methyltransf_30"/>
    <property type="match status" value="1"/>
</dbReference>
<dbReference type="SUPFAM" id="SSF54373">
    <property type="entry name" value="FAD-linked reductases, C-terminal domain"/>
    <property type="match status" value="1"/>
</dbReference>
<dbReference type="SUPFAM" id="SSF51905">
    <property type="entry name" value="FAD/NAD(P)-binding domain"/>
    <property type="match status" value="1"/>
</dbReference>
<protein>
    <recommendedName>
        <fullName evidence="1">tRNA 5-methylaminomethyl-2-thiouridine biosynthesis bifunctional protein MnmC</fullName>
        <shortName evidence="1">tRNA mnm(5)s(2)U biosynthesis bifunctional protein</shortName>
    </recommendedName>
    <domain>
        <recommendedName>
            <fullName evidence="1">tRNA (mnm(5)s(2)U34)-methyltransferase</fullName>
            <ecNumber evidence="1">2.1.1.61</ecNumber>
        </recommendedName>
    </domain>
    <domain>
        <recommendedName>
            <fullName evidence="1">FAD-dependent cmnm(5)s(2)U34 oxidoreductase</fullName>
            <ecNumber evidence="1">1.5.-.-</ecNumber>
        </recommendedName>
    </domain>
</protein>
<proteinExistence type="inferred from homology"/>
<evidence type="ECO:0000255" key="1">
    <source>
        <dbReference type="HAMAP-Rule" id="MF_01102"/>
    </source>
</evidence>
<keyword id="KW-0963">Cytoplasm</keyword>
<keyword id="KW-0274">FAD</keyword>
<keyword id="KW-0285">Flavoprotein</keyword>
<keyword id="KW-0489">Methyltransferase</keyword>
<keyword id="KW-0511">Multifunctional enzyme</keyword>
<keyword id="KW-0560">Oxidoreductase</keyword>
<keyword id="KW-0949">S-adenosyl-L-methionine</keyword>
<keyword id="KW-0808">Transferase</keyword>
<keyword id="KW-0819">tRNA processing</keyword>
<accession>Q39L16</accession>
<organism>
    <name type="scientific">Burkholderia lata (strain ATCC 17760 / DSM 23089 / LMG 22485 / NCIMB 9086 / R18194 / 383)</name>
    <dbReference type="NCBI Taxonomy" id="482957"/>
    <lineage>
        <taxon>Bacteria</taxon>
        <taxon>Pseudomonadati</taxon>
        <taxon>Pseudomonadota</taxon>
        <taxon>Betaproteobacteria</taxon>
        <taxon>Burkholderiales</taxon>
        <taxon>Burkholderiaceae</taxon>
        <taxon>Burkholderia</taxon>
        <taxon>Burkholderia cepacia complex</taxon>
    </lineage>
</organism>
<feature type="chain" id="PRO_0000347963" description="tRNA 5-methylaminomethyl-2-thiouridine biosynthesis bifunctional protein MnmC">
    <location>
        <begin position="1"/>
        <end position="648"/>
    </location>
</feature>
<feature type="region of interest" description="tRNA (mnm(5)s(2)U34)-methyltransferase">
    <location>
        <begin position="1"/>
        <end position="228"/>
    </location>
</feature>
<feature type="region of interest" description="FAD-dependent cmnm(5)s(2)U34 oxidoreductase">
    <location>
        <begin position="252"/>
        <end position="648"/>
    </location>
</feature>
<name>MNMC_BURL3</name>
<comment type="function">
    <text evidence="1">Catalyzes the last two steps in the biosynthesis of 5-methylaminomethyl-2-thiouridine (mnm(5)s(2)U) at the wobble position (U34) in tRNA. Catalyzes the FAD-dependent demodification of cmnm(5)s(2)U34 to nm(5)s(2)U34, followed by the transfer of a methyl group from S-adenosyl-L-methionine to nm(5)s(2)U34, to form mnm(5)s(2)U34.</text>
</comment>
<comment type="catalytic activity">
    <reaction evidence="1">
        <text>5-aminomethyl-2-thiouridine(34) in tRNA + S-adenosyl-L-methionine = 5-methylaminomethyl-2-thiouridine(34) in tRNA + S-adenosyl-L-homocysteine + H(+)</text>
        <dbReference type="Rhea" id="RHEA:19569"/>
        <dbReference type="Rhea" id="RHEA-COMP:10195"/>
        <dbReference type="Rhea" id="RHEA-COMP:10197"/>
        <dbReference type="ChEBI" id="CHEBI:15378"/>
        <dbReference type="ChEBI" id="CHEBI:57856"/>
        <dbReference type="ChEBI" id="CHEBI:59789"/>
        <dbReference type="ChEBI" id="CHEBI:74454"/>
        <dbReference type="ChEBI" id="CHEBI:74455"/>
        <dbReference type="EC" id="2.1.1.61"/>
    </reaction>
</comment>
<comment type="cofactor">
    <cofactor evidence="1">
        <name>FAD</name>
        <dbReference type="ChEBI" id="CHEBI:57692"/>
    </cofactor>
</comment>
<comment type="subcellular location">
    <subcellularLocation>
        <location evidence="1">Cytoplasm</location>
    </subcellularLocation>
</comment>
<comment type="similarity">
    <text evidence="1">In the N-terminal section; belongs to the methyltransferase superfamily. tRNA (mnm(5)s(2)U34)-methyltransferase family.</text>
</comment>
<comment type="similarity">
    <text evidence="1">In the C-terminal section; belongs to the DAO family.</text>
</comment>
<gene>
    <name evidence="1" type="primary">mnmC</name>
    <name type="ordered locus">Bcep18194_A3248</name>
</gene>